<gene>
    <name type="primary">CD1D</name>
</gene>
<organism>
    <name type="scientific">Homo sapiens</name>
    <name type="common">Human</name>
    <dbReference type="NCBI Taxonomy" id="9606"/>
    <lineage>
        <taxon>Eukaryota</taxon>
        <taxon>Metazoa</taxon>
        <taxon>Chordata</taxon>
        <taxon>Craniata</taxon>
        <taxon>Vertebrata</taxon>
        <taxon>Euteleostomi</taxon>
        <taxon>Mammalia</taxon>
        <taxon>Eutheria</taxon>
        <taxon>Euarchontoglires</taxon>
        <taxon>Primates</taxon>
        <taxon>Haplorrhini</taxon>
        <taxon>Catarrhini</taxon>
        <taxon>Hominidae</taxon>
        <taxon>Homo</taxon>
    </lineage>
</organism>
<evidence type="ECO:0000250" key="1"/>
<evidence type="ECO:0000255" key="2"/>
<evidence type="ECO:0000269" key="3">
    <source>
    </source>
</evidence>
<evidence type="ECO:0000269" key="4">
    <source>
    </source>
</evidence>
<evidence type="ECO:0000269" key="5">
    <source>
    </source>
</evidence>
<evidence type="ECO:0000269" key="6">
    <source>
    </source>
</evidence>
<evidence type="ECO:0000269" key="7">
    <source>
    </source>
</evidence>
<evidence type="ECO:0000269" key="8">
    <source>
    </source>
</evidence>
<evidence type="ECO:0000269" key="9">
    <source>
    </source>
</evidence>
<evidence type="ECO:0000305" key="10">
    <source>
    </source>
</evidence>
<evidence type="ECO:0007744" key="11">
    <source>
        <dbReference type="PDB" id="1ZT4"/>
    </source>
</evidence>
<evidence type="ECO:0007744" key="12">
    <source>
        <dbReference type="PDB" id="2PO6"/>
    </source>
</evidence>
<evidence type="ECO:0007829" key="13">
    <source>
        <dbReference type="PDB" id="1ZT4"/>
    </source>
</evidence>
<evidence type="ECO:0007829" key="14">
    <source>
        <dbReference type="PDB" id="3VWJ"/>
    </source>
</evidence>
<evidence type="ECO:0007829" key="15">
    <source>
        <dbReference type="PDB" id="4LHU"/>
    </source>
</evidence>
<evidence type="ECO:0007829" key="16">
    <source>
        <dbReference type="PDB" id="6V7Y"/>
    </source>
</evidence>
<evidence type="ECO:0007829" key="17">
    <source>
        <dbReference type="PDB" id="8SGB"/>
    </source>
</evidence>
<evidence type="ECO:0007829" key="18">
    <source>
        <dbReference type="PDB" id="8SOS"/>
    </source>
</evidence>
<feature type="signal peptide" evidence="2">
    <location>
        <begin position="1"/>
        <end position="19"/>
    </location>
</feature>
<feature type="chain" id="PRO_0000014581" description="Antigen-presenting glycoprotein CD1d">
    <location>
        <begin position="20"/>
        <end position="335"/>
    </location>
</feature>
<feature type="topological domain" description="Extracellular" evidence="2">
    <location>
        <begin position="20"/>
        <end position="301"/>
    </location>
</feature>
<feature type="transmembrane region" description="Helical" evidence="2">
    <location>
        <begin position="302"/>
        <end position="322"/>
    </location>
</feature>
<feature type="topological domain" description="Cytoplasmic" evidence="2">
    <location>
        <begin position="323"/>
        <end position="335"/>
    </location>
</feature>
<feature type="domain" description="Ig-like">
    <location>
        <begin position="185"/>
        <end position="292"/>
    </location>
</feature>
<feature type="short sequence motif" description="Internalization signal">
    <location>
        <begin position="331"/>
        <end position="334"/>
    </location>
</feature>
<feature type="binding site" evidence="5 7 11 12">
    <location>
        <position position="98"/>
    </location>
    <ligand>
        <name>a D-galactosylceramide</name>
        <dbReference type="ChEBI" id="CHEBI:36498"/>
    </ligand>
</feature>
<feature type="binding site" evidence="5 7 11 12">
    <location>
        <begin position="169"/>
        <end position="172"/>
    </location>
    <ligand>
        <name>a D-galactosylceramide</name>
        <dbReference type="ChEBI" id="CHEBI:36498"/>
    </ligand>
</feature>
<feature type="glycosylation site" description="N-linked (GlcNAc...) asparagine" evidence="7">
    <location>
        <position position="38"/>
    </location>
</feature>
<feature type="glycosylation site" description="N-linked (GlcNAc...) asparagine" evidence="7 8">
    <location>
        <position position="60"/>
    </location>
</feature>
<feature type="glycosylation site" description="N-linked (GlcNAc...) asparagine" evidence="2">
    <location>
        <position position="126"/>
    </location>
</feature>
<feature type="glycosylation site" description="N-linked (GlcNAc...) asparagine" evidence="2">
    <location>
        <position position="181"/>
    </location>
</feature>
<feature type="disulfide bond" evidence="5 7 11 12">
    <location>
        <begin position="120"/>
        <end position="184"/>
    </location>
</feature>
<feature type="disulfide bond" evidence="5 7 11 12">
    <location>
        <begin position="224"/>
        <end position="279"/>
    </location>
</feature>
<feature type="sequence variant" id="VAR_010211" description="In dbSNP:rs62621276." evidence="3">
    <original>T</original>
    <variation>S</variation>
    <location>
        <position position="64"/>
    </location>
</feature>
<feature type="mutagenesis site" description="Strongly reduced internalization." evidence="9">
    <original>Y</original>
    <variation>A</variation>
    <location>
        <position position="331"/>
    </location>
</feature>
<feature type="mutagenesis site" description="Strongly reduced internalization." evidence="9">
    <original>V</original>
    <variation>A</variation>
    <location>
        <position position="334"/>
    </location>
</feature>
<feature type="helix" evidence="16">
    <location>
        <begin position="23"/>
        <end position="25"/>
    </location>
</feature>
<feature type="strand" evidence="18">
    <location>
        <begin position="28"/>
        <end position="38"/>
    </location>
</feature>
<feature type="strand" evidence="18">
    <location>
        <begin position="41"/>
        <end position="50"/>
    </location>
</feature>
<feature type="strand" evidence="18">
    <location>
        <begin position="53"/>
        <end position="58"/>
    </location>
</feature>
<feature type="strand" evidence="13">
    <location>
        <begin position="60"/>
        <end position="64"/>
    </location>
</feature>
<feature type="strand" evidence="18">
    <location>
        <begin position="66"/>
        <end position="69"/>
    </location>
</feature>
<feature type="turn" evidence="18">
    <location>
        <begin position="70"/>
        <end position="75"/>
    </location>
</feature>
<feature type="helix" evidence="18">
    <location>
        <begin position="78"/>
        <end position="105"/>
    </location>
</feature>
<feature type="strand" evidence="18">
    <location>
        <begin position="112"/>
        <end position="122"/>
    </location>
</feature>
<feature type="turn" evidence="16">
    <location>
        <begin position="124"/>
        <end position="126"/>
    </location>
</feature>
<feature type="strand" evidence="18">
    <location>
        <begin position="128"/>
        <end position="136"/>
    </location>
</feature>
<feature type="strand" evidence="18">
    <location>
        <begin position="139"/>
        <end position="145"/>
    </location>
</feature>
<feature type="strand" evidence="18">
    <location>
        <begin position="148"/>
        <end position="151"/>
    </location>
</feature>
<feature type="helix" evidence="18">
    <location>
        <begin position="158"/>
        <end position="166"/>
    </location>
</feature>
<feature type="helix" evidence="18">
    <location>
        <begin position="170"/>
        <end position="181"/>
    </location>
</feature>
<feature type="helix" evidence="18">
    <location>
        <begin position="183"/>
        <end position="194"/>
    </location>
</feature>
<feature type="helix" evidence="18">
    <location>
        <begin position="196"/>
        <end position="199"/>
    </location>
</feature>
<feature type="strand" evidence="18">
    <location>
        <begin position="206"/>
        <end position="211"/>
    </location>
</feature>
<feature type="strand" evidence="15">
    <location>
        <begin position="215"/>
        <end position="218"/>
    </location>
</feature>
<feature type="strand" evidence="18">
    <location>
        <begin position="219"/>
        <end position="232"/>
    </location>
</feature>
<feature type="strand" evidence="18">
    <location>
        <begin position="235"/>
        <end position="240"/>
    </location>
</feature>
<feature type="strand" evidence="13">
    <location>
        <begin position="241"/>
        <end position="243"/>
    </location>
</feature>
<feature type="strand" evidence="17">
    <location>
        <begin position="248"/>
        <end position="250"/>
    </location>
</feature>
<feature type="turn" evidence="14">
    <location>
        <begin position="257"/>
        <end position="259"/>
    </location>
</feature>
<feature type="strand" evidence="18">
    <location>
        <begin position="261"/>
        <end position="270"/>
    </location>
</feature>
<feature type="turn" evidence="18">
    <location>
        <begin position="271"/>
        <end position="273"/>
    </location>
</feature>
<feature type="strand" evidence="18">
    <location>
        <begin position="278"/>
        <end position="282"/>
    </location>
</feature>
<feature type="helix" evidence="18">
    <location>
        <begin position="284"/>
        <end position="286"/>
    </location>
</feature>
<feature type="strand" evidence="18">
    <location>
        <begin position="291"/>
        <end position="294"/>
    </location>
</feature>
<accession>P15813</accession>
<accession>D3DVD5</accession>
<accession>Q5W0J3</accession>
<accession>Q9UMM3</accession>
<accession>Q9Y5M4</accession>
<reference key="1">
    <citation type="journal article" date="1989" name="Eur. J. Immunol.">
        <title>Two classes of CD1 genes.</title>
        <authorList>
            <person name="Calabi F."/>
            <person name="Jarvis J.M."/>
            <person name="Martin L."/>
            <person name="Milstein C."/>
        </authorList>
    </citation>
    <scope>NUCLEOTIDE SEQUENCE [GENOMIC DNA]</scope>
</reference>
<reference key="2">
    <citation type="journal article" date="1989" name="Proc. Natl. Acad. Sci. U.S.A.">
        <title>Isolation and characterization of a cDNA and gene coding for a fourth CD1 molecule.</title>
        <authorList>
            <person name="Balk S.P."/>
            <person name="Bleicher P.A."/>
            <person name="Terhorst C."/>
        </authorList>
    </citation>
    <scope>NUCLEOTIDE SEQUENCE [GENOMIC DNA / MRNA]</scope>
</reference>
<reference key="3">
    <citation type="journal article" date="2006" name="Nature">
        <title>The DNA sequence and biological annotation of human chromosome 1.</title>
        <authorList>
            <person name="Gregory S.G."/>
            <person name="Barlow K.F."/>
            <person name="McLay K.E."/>
            <person name="Kaul R."/>
            <person name="Swarbreck D."/>
            <person name="Dunham A."/>
            <person name="Scott C.E."/>
            <person name="Howe K.L."/>
            <person name="Woodfine K."/>
            <person name="Spencer C.C.A."/>
            <person name="Jones M.C."/>
            <person name="Gillson C."/>
            <person name="Searle S."/>
            <person name="Zhou Y."/>
            <person name="Kokocinski F."/>
            <person name="McDonald L."/>
            <person name="Evans R."/>
            <person name="Phillips K."/>
            <person name="Atkinson A."/>
            <person name="Cooper R."/>
            <person name="Jones C."/>
            <person name="Hall R.E."/>
            <person name="Andrews T.D."/>
            <person name="Lloyd C."/>
            <person name="Ainscough R."/>
            <person name="Almeida J.P."/>
            <person name="Ambrose K.D."/>
            <person name="Anderson F."/>
            <person name="Andrew R.W."/>
            <person name="Ashwell R.I.S."/>
            <person name="Aubin K."/>
            <person name="Babbage A.K."/>
            <person name="Bagguley C.L."/>
            <person name="Bailey J."/>
            <person name="Beasley H."/>
            <person name="Bethel G."/>
            <person name="Bird C.P."/>
            <person name="Bray-Allen S."/>
            <person name="Brown J.Y."/>
            <person name="Brown A.J."/>
            <person name="Buckley D."/>
            <person name="Burton J."/>
            <person name="Bye J."/>
            <person name="Carder C."/>
            <person name="Chapman J.C."/>
            <person name="Clark S.Y."/>
            <person name="Clarke G."/>
            <person name="Clee C."/>
            <person name="Cobley V."/>
            <person name="Collier R.E."/>
            <person name="Corby N."/>
            <person name="Coville G.J."/>
            <person name="Davies J."/>
            <person name="Deadman R."/>
            <person name="Dunn M."/>
            <person name="Earthrowl M."/>
            <person name="Ellington A.G."/>
            <person name="Errington H."/>
            <person name="Frankish A."/>
            <person name="Frankland J."/>
            <person name="French L."/>
            <person name="Garner P."/>
            <person name="Garnett J."/>
            <person name="Gay L."/>
            <person name="Ghori M.R.J."/>
            <person name="Gibson R."/>
            <person name="Gilby L.M."/>
            <person name="Gillett W."/>
            <person name="Glithero R.J."/>
            <person name="Grafham D.V."/>
            <person name="Griffiths C."/>
            <person name="Griffiths-Jones S."/>
            <person name="Grocock R."/>
            <person name="Hammond S."/>
            <person name="Harrison E.S.I."/>
            <person name="Hart E."/>
            <person name="Haugen E."/>
            <person name="Heath P.D."/>
            <person name="Holmes S."/>
            <person name="Holt K."/>
            <person name="Howden P.J."/>
            <person name="Hunt A.R."/>
            <person name="Hunt S.E."/>
            <person name="Hunter G."/>
            <person name="Isherwood J."/>
            <person name="James R."/>
            <person name="Johnson C."/>
            <person name="Johnson D."/>
            <person name="Joy A."/>
            <person name="Kay M."/>
            <person name="Kershaw J.K."/>
            <person name="Kibukawa M."/>
            <person name="Kimberley A.M."/>
            <person name="King A."/>
            <person name="Knights A.J."/>
            <person name="Lad H."/>
            <person name="Laird G."/>
            <person name="Lawlor S."/>
            <person name="Leongamornlert D.A."/>
            <person name="Lloyd D.M."/>
            <person name="Loveland J."/>
            <person name="Lovell J."/>
            <person name="Lush M.J."/>
            <person name="Lyne R."/>
            <person name="Martin S."/>
            <person name="Mashreghi-Mohammadi M."/>
            <person name="Matthews L."/>
            <person name="Matthews N.S.W."/>
            <person name="McLaren S."/>
            <person name="Milne S."/>
            <person name="Mistry S."/>
            <person name="Moore M.J.F."/>
            <person name="Nickerson T."/>
            <person name="O'Dell C.N."/>
            <person name="Oliver K."/>
            <person name="Palmeiri A."/>
            <person name="Palmer S.A."/>
            <person name="Parker A."/>
            <person name="Patel D."/>
            <person name="Pearce A.V."/>
            <person name="Peck A.I."/>
            <person name="Pelan S."/>
            <person name="Phelps K."/>
            <person name="Phillimore B.J."/>
            <person name="Plumb R."/>
            <person name="Rajan J."/>
            <person name="Raymond C."/>
            <person name="Rouse G."/>
            <person name="Saenphimmachak C."/>
            <person name="Sehra H.K."/>
            <person name="Sheridan E."/>
            <person name="Shownkeen R."/>
            <person name="Sims S."/>
            <person name="Skuce C.D."/>
            <person name="Smith M."/>
            <person name="Steward C."/>
            <person name="Subramanian S."/>
            <person name="Sycamore N."/>
            <person name="Tracey A."/>
            <person name="Tromans A."/>
            <person name="Van Helmond Z."/>
            <person name="Wall M."/>
            <person name="Wallis J.M."/>
            <person name="White S."/>
            <person name="Whitehead S.L."/>
            <person name="Wilkinson J.E."/>
            <person name="Willey D.L."/>
            <person name="Williams H."/>
            <person name="Wilming L."/>
            <person name="Wray P.W."/>
            <person name="Wu Z."/>
            <person name="Coulson A."/>
            <person name="Vaudin M."/>
            <person name="Sulston J.E."/>
            <person name="Durbin R.M."/>
            <person name="Hubbard T."/>
            <person name="Wooster R."/>
            <person name="Dunham I."/>
            <person name="Carter N.P."/>
            <person name="McVean G."/>
            <person name="Ross M.T."/>
            <person name="Harrow J."/>
            <person name="Olson M.V."/>
            <person name="Beck S."/>
            <person name="Rogers J."/>
            <person name="Bentley D.R."/>
        </authorList>
    </citation>
    <scope>NUCLEOTIDE SEQUENCE [LARGE SCALE GENOMIC DNA]</scope>
</reference>
<reference key="4">
    <citation type="submission" date="2005-09" db="EMBL/GenBank/DDBJ databases">
        <authorList>
            <person name="Mural R.J."/>
            <person name="Istrail S."/>
            <person name="Sutton G.G."/>
            <person name="Florea L."/>
            <person name="Halpern A.L."/>
            <person name="Mobarry C.M."/>
            <person name="Lippert R."/>
            <person name="Walenz B."/>
            <person name="Shatkay H."/>
            <person name="Dew I."/>
            <person name="Miller J.R."/>
            <person name="Flanigan M.J."/>
            <person name="Edwards N.J."/>
            <person name="Bolanos R."/>
            <person name="Fasulo D."/>
            <person name="Halldorsson B.V."/>
            <person name="Hannenhalli S."/>
            <person name="Turner R."/>
            <person name="Yooseph S."/>
            <person name="Lu F."/>
            <person name="Nusskern D.R."/>
            <person name="Shue B.C."/>
            <person name="Zheng X.H."/>
            <person name="Zhong F."/>
            <person name="Delcher A.L."/>
            <person name="Huson D.H."/>
            <person name="Kravitz S.A."/>
            <person name="Mouchard L."/>
            <person name="Reinert K."/>
            <person name="Remington K.A."/>
            <person name="Clark A.G."/>
            <person name="Waterman M.S."/>
            <person name="Eichler E.E."/>
            <person name="Adams M.D."/>
            <person name="Hunkapiller M.W."/>
            <person name="Myers E.W."/>
            <person name="Venter J.C."/>
        </authorList>
    </citation>
    <scope>NUCLEOTIDE SEQUENCE [LARGE SCALE GENOMIC DNA]</scope>
</reference>
<reference key="5">
    <citation type="journal article" date="2004" name="Genome Res.">
        <title>The status, quality, and expansion of the NIH full-length cDNA project: the Mammalian Gene Collection (MGC).</title>
        <authorList>
            <consortium name="The MGC Project Team"/>
        </authorList>
    </citation>
    <scope>NUCLEOTIDE SEQUENCE [LARGE SCALE MRNA]</scope>
    <source>
        <tissue>Pancreas</tissue>
    </source>
</reference>
<reference key="6">
    <citation type="journal article" date="1999" name="Tissue Antigens">
        <title>Polymorphism of human CD1 genes.</title>
        <authorList>
            <person name="Han M."/>
            <person name="Hannick L.I."/>
            <person name="DiBrino M."/>
            <person name="Robinson M.A."/>
        </authorList>
    </citation>
    <scope>NUCLEOTIDE SEQUENCE [GENOMIC DNA] OF 19-109</scope>
    <scope>VARIANT SER-64</scope>
</reference>
<reference key="7">
    <citation type="journal article" date="1986" name="Proc. Natl. Acad. Sci. U.S.A.">
        <title>Isolation of CD1 genes: a family of major histocompatibility complex-related differentiation antigens.</title>
        <authorList>
            <person name="Martin L.H."/>
            <person name="Calabi F."/>
            <person name="Milstein C."/>
        </authorList>
    </citation>
    <scope>NUCLEOTIDE SEQUENCE [GENOMIC DNA] OF 203-295</scope>
</reference>
<reference key="8">
    <citation type="journal article" date="1999" name="J. Immunol.">
        <title>A critical tyrosine residue in the cytoplasmic tail is important for CD1d internalization but not for its basolateral sorting in MDCK cells.</title>
        <authorList>
            <person name="Rodionov D.G."/>
            <person name="Nordeng T.W."/>
            <person name="Pedersen K."/>
            <person name="Balk S.P."/>
            <person name="Bakke O."/>
        </authorList>
    </citation>
    <scope>SUBCELLULAR LOCATION</scope>
    <scope>TOPOLOGY</scope>
    <scope>MUTAGENESIS OF TYR-331 AND VAL-334</scope>
</reference>
<reference key="9">
    <citation type="journal article" date="2002" name="EMBO J.">
        <title>Regulation of intracellular trafficking of human CD1d by association with MHC class II molecules.</title>
        <authorList>
            <person name="Kang S.-J."/>
            <person name="Cresswell P."/>
        </authorList>
    </citation>
    <scope>SUBCELLULAR LOCATION</scope>
    <scope>INTERACTION WITH B2M AND MHC II</scope>
</reference>
<reference key="10">
    <citation type="journal article" date="2006" name="J. Immunol.">
        <title>CD1d ligands: the good, the bad, and the ugly.</title>
        <authorList>
            <person name="Brutkiewicz R.R."/>
        </authorList>
    </citation>
    <scope>REVIEW</scope>
</reference>
<reference key="11">
    <citation type="journal article" date="2007" name="J. Immunol.">
        <title>Distinct endosomal trafficking requirements for presentation of autoantigens and exogenous lipids by human CD1d molecules.</title>
        <authorList>
            <person name="Chen X."/>
            <person name="Wang X."/>
            <person name="Keaton J.M."/>
            <person name="Reddington F."/>
            <person name="Illarionov P.A."/>
            <person name="Besra G.S."/>
            <person name="Gumperz J.E."/>
        </authorList>
    </citation>
    <scope>FUNCTION</scope>
    <scope>SUBCELLULAR LOCATION</scope>
</reference>
<reference key="12">
    <citation type="journal article" date="2009" name="Nat. Biotechnol.">
        <title>Mass-spectrometric identification and relative quantification of N-linked cell surface glycoproteins.</title>
        <authorList>
            <person name="Wollscheid B."/>
            <person name="Bausch-Fluck D."/>
            <person name="Henderson C."/>
            <person name="O'Brien R."/>
            <person name="Bibel M."/>
            <person name="Schiess R."/>
            <person name="Aebersold R."/>
            <person name="Watts J.D."/>
        </authorList>
    </citation>
    <scope>GLYCOSYLATION [LARGE SCALE ANALYSIS] AT ASN-60</scope>
    <source>
        <tissue>Leukemic T-cell</tissue>
    </source>
</reference>
<reference key="13">
    <citation type="journal article" date="2005" name="Nat. Immunol.">
        <title>The crystal structure of human CD1d with and without alpha-galactosylceramide.</title>
        <authorList>
            <person name="Koch M."/>
            <person name="Stronge V.S."/>
            <person name="Shepherd D."/>
            <person name="Gadola S.D."/>
            <person name="Mathew B."/>
            <person name="Ritter G."/>
            <person name="Fersht A.R."/>
            <person name="Besra G.S."/>
            <person name="Schmidt R.R."/>
            <person name="Jones E.Y."/>
            <person name="Cerundolo V."/>
        </authorList>
    </citation>
    <scope>X-RAY CRYSTALLOGRAPHY (3.0 ANGSTROMS) OF 19-299 IN COMPLEX WITH B2M AND GALACTOSYLCERAMIDE</scope>
    <scope>DISULFIDE BONDS</scope>
</reference>
<reference key="14">
    <citation type="journal article" date="2007" name="Nature">
        <title>CD1d-lipid-antigen recognition by the semi-invariant NKT T-cell receptor.</title>
        <authorList>
            <person name="Borg N.A."/>
            <person name="Wun K.S."/>
            <person name="Kjer-Nielsen L."/>
            <person name="Wilce M.C.J."/>
            <person name="Pellicci D.G."/>
            <person name="Koh R."/>
            <person name="Besra G.S."/>
            <person name="Bharadwaj M."/>
            <person name="Godfrey D.I."/>
            <person name="McCluskey J."/>
            <person name="Rossjohn J."/>
        </authorList>
    </citation>
    <scope>X-RAY CRYSTALLOGRAPHY (3.2 ANGSTROMS) OF 24-295 IN COMPLEX WITH B2M AND T-CELL RECEPTOR</scope>
    <scope>GLYCOSYLATION AT ASN-38 AND ASN-60</scope>
</reference>
<protein>
    <recommendedName>
        <fullName>Antigen-presenting glycoprotein CD1d</fullName>
    </recommendedName>
    <alternativeName>
        <fullName>R3G1</fullName>
    </alternativeName>
    <cdAntigenName>CD1d</cdAntigenName>
</protein>
<dbReference type="EMBL" id="L38820">
    <property type="protein sequence ID" value="AAA59672.1"/>
    <property type="molecule type" value="Genomic_DNA"/>
</dbReference>
<dbReference type="EMBL" id="L38815">
    <property type="protein sequence ID" value="AAA59672.1"/>
    <property type="status" value="JOINED"/>
    <property type="molecule type" value="Genomic_DNA"/>
</dbReference>
<dbReference type="EMBL" id="L38817">
    <property type="protein sequence ID" value="AAA59672.1"/>
    <property type="status" value="JOINED"/>
    <property type="molecule type" value="Genomic_DNA"/>
</dbReference>
<dbReference type="EMBL" id="L38816">
    <property type="protein sequence ID" value="AAA59672.1"/>
    <property type="status" value="JOINED"/>
    <property type="molecule type" value="Genomic_DNA"/>
</dbReference>
<dbReference type="EMBL" id="L38818">
    <property type="protein sequence ID" value="AAA59672.1"/>
    <property type="status" value="JOINED"/>
    <property type="molecule type" value="Genomic_DNA"/>
</dbReference>
<dbReference type="EMBL" id="L38819">
    <property type="protein sequence ID" value="AAA59672.1"/>
    <property type="status" value="JOINED"/>
    <property type="molecule type" value="Genomic_DNA"/>
</dbReference>
<dbReference type="EMBL" id="X14974">
    <property type="protein sequence ID" value="CAA33099.1"/>
    <property type="molecule type" value="Genomic_DNA"/>
</dbReference>
<dbReference type="EMBL" id="J04142">
    <property type="protein sequence ID" value="AAA59673.1"/>
    <property type="molecule type" value="mRNA"/>
</dbReference>
<dbReference type="EMBL" id="AL138899">
    <property type="status" value="NOT_ANNOTATED_CDS"/>
    <property type="molecule type" value="Genomic_DNA"/>
</dbReference>
<dbReference type="EMBL" id="CH471121">
    <property type="protein sequence ID" value="EAW52847.1"/>
    <property type="molecule type" value="Genomic_DNA"/>
</dbReference>
<dbReference type="EMBL" id="CH471121">
    <property type="protein sequence ID" value="EAW52848.1"/>
    <property type="molecule type" value="Genomic_DNA"/>
</dbReference>
<dbReference type="EMBL" id="CH471121">
    <property type="protein sequence ID" value="EAW52849.1"/>
    <property type="molecule type" value="Genomic_DNA"/>
</dbReference>
<dbReference type="EMBL" id="BC027926">
    <property type="protein sequence ID" value="AAH27926.1"/>
    <property type="molecule type" value="mRNA"/>
</dbReference>
<dbReference type="EMBL" id="AF142668">
    <property type="protein sequence ID" value="AAD37581.1"/>
    <property type="molecule type" value="Genomic_DNA"/>
</dbReference>
<dbReference type="EMBL" id="M14664">
    <property type="protein sequence ID" value="AAA51935.1"/>
    <property type="molecule type" value="Genomic_DNA"/>
</dbReference>
<dbReference type="CCDS" id="CCDS1173.1"/>
<dbReference type="PIR" id="S07715">
    <property type="entry name" value="HLHUR3"/>
</dbReference>
<dbReference type="RefSeq" id="NP_001306074.1">
    <property type="nucleotide sequence ID" value="NM_001319145.1"/>
</dbReference>
<dbReference type="RefSeq" id="NP_001358691.1">
    <property type="nucleotide sequence ID" value="NM_001371762.2"/>
</dbReference>
<dbReference type="RefSeq" id="NP_001358692.1">
    <property type="nucleotide sequence ID" value="NM_001371763.1"/>
</dbReference>
<dbReference type="RefSeq" id="NP_001757.1">
    <property type="nucleotide sequence ID" value="NM_001766.4"/>
</dbReference>
<dbReference type="RefSeq" id="XP_011508427.1">
    <property type="nucleotide sequence ID" value="XM_011510125.1"/>
</dbReference>
<dbReference type="RefSeq" id="XP_054195527.1">
    <property type="nucleotide sequence ID" value="XM_054339552.1"/>
</dbReference>
<dbReference type="PDB" id="1ZT4">
    <property type="method" value="X-ray"/>
    <property type="resolution" value="3.00 A"/>
    <property type="chains" value="A/C=19-299"/>
</dbReference>
<dbReference type="PDB" id="2PO6">
    <property type="method" value="X-ray"/>
    <property type="resolution" value="3.20 A"/>
    <property type="chains" value="A/E=24-295"/>
</dbReference>
<dbReference type="PDB" id="3HUJ">
    <property type="method" value="X-ray"/>
    <property type="resolution" value="2.50 A"/>
    <property type="chains" value="A/C=21-295"/>
</dbReference>
<dbReference type="PDB" id="3SDX">
    <property type="method" value="X-ray"/>
    <property type="resolution" value="3.12 A"/>
    <property type="chains" value="A/C=24-295"/>
</dbReference>
<dbReference type="PDB" id="3TZV">
    <property type="method" value="X-ray"/>
    <property type="resolution" value="3.06 A"/>
    <property type="chains" value="C=21-295"/>
</dbReference>
<dbReference type="PDB" id="3U0P">
    <property type="method" value="X-ray"/>
    <property type="resolution" value="2.80 A"/>
    <property type="chains" value="A/C/E=21-295"/>
</dbReference>
<dbReference type="PDB" id="3VWJ">
    <property type="method" value="X-ray"/>
    <property type="resolution" value="3.09 A"/>
    <property type="chains" value="A=21-295"/>
</dbReference>
<dbReference type="PDB" id="3VWK">
    <property type="method" value="X-ray"/>
    <property type="resolution" value="2.94 A"/>
    <property type="chains" value="A=21-295"/>
</dbReference>
<dbReference type="PDB" id="4EN3">
    <property type="method" value="X-ray"/>
    <property type="resolution" value="2.57 A"/>
    <property type="chains" value="C=21-295"/>
</dbReference>
<dbReference type="PDB" id="4LHU">
    <property type="method" value="X-ray"/>
    <property type="resolution" value="2.87 A"/>
    <property type="chains" value="A=24-295"/>
</dbReference>
<dbReference type="PDB" id="4MNG">
    <property type="method" value="X-ray"/>
    <property type="resolution" value="3.01 A"/>
    <property type="chains" value="A/C=21-201"/>
</dbReference>
<dbReference type="PDB" id="4MQ7">
    <property type="method" value="X-ray"/>
    <property type="resolution" value="2.60 A"/>
    <property type="chains" value="A=21-202"/>
</dbReference>
<dbReference type="PDB" id="4WO4">
    <property type="method" value="X-ray"/>
    <property type="resolution" value="2.50 A"/>
    <property type="chains" value="A=24-295"/>
</dbReference>
<dbReference type="PDB" id="4WW2">
    <property type="method" value="X-ray"/>
    <property type="resolution" value="2.48 A"/>
    <property type="chains" value="C=21-295"/>
</dbReference>
<dbReference type="PDB" id="4WWK">
    <property type="method" value="X-ray"/>
    <property type="resolution" value="3.10 A"/>
    <property type="chains" value="C=21-295"/>
</dbReference>
<dbReference type="PDB" id="6V7Y">
    <property type="method" value="X-ray"/>
    <property type="resolution" value="2.40 A"/>
    <property type="chains" value="A=23-296"/>
</dbReference>
<dbReference type="PDB" id="6V7Z">
    <property type="method" value="X-ray"/>
    <property type="resolution" value="2.75 A"/>
    <property type="chains" value="A/C=23-296"/>
</dbReference>
<dbReference type="PDB" id="6V80">
    <property type="method" value="X-ray"/>
    <property type="resolution" value="3.53 A"/>
    <property type="chains" value="A/F=23-296"/>
</dbReference>
<dbReference type="PDB" id="8SGB">
    <property type="method" value="X-ray"/>
    <property type="resolution" value="2.80 A"/>
    <property type="chains" value="A=23-296"/>
</dbReference>
<dbReference type="PDB" id="8SGM">
    <property type="method" value="X-ray"/>
    <property type="resolution" value="2.50 A"/>
    <property type="chains" value="A=23-294"/>
</dbReference>
<dbReference type="PDB" id="8SOS">
    <property type="method" value="X-ray"/>
    <property type="resolution" value="2.33 A"/>
    <property type="chains" value="A/E=23-296"/>
</dbReference>
<dbReference type="PDBsum" id="1ZT4"/>
<dbReference type="PDBsum" id="2PO6"/>
<dbReference type="PDBsum" id="3HUJ"/>
<dbReference type="PDBsum" id="3SDX"/>
<dbReference type="PDBsum" id="3TZV"/>
<dbReference type="PDBsum" id="3U0P"/>
<dbReference type="PDBsum" id="3VWJ"/>
<dbReference type="PDBsum" id="3VWK"/>
<dbReference type="PDBsum" id="4EN3"/>
<dbReference type="PDBsum" id="4LHU"/>
<dbReference type="PDBsum" id="4MNG"/>
<dbReference type="PDBsum" id="4MQ7"/>
<dbReference type="PDBsum" id="4WO4"/>
<dbReference type="PDBsum" id="4WW2"/>
<dbReference type="PDBsum" id="4WWK"/>
<dbReference type="PDBsum" id="6V7Y"/>
<dbReference type="PDBsum" id="6V7Z"/>
<dbReference type="PDBsum" id="6V80"/>
<dbReference type="PDBsum" id="8SGB"/>
<dbReference type="PDBsum" id="8SGM"/>
<dbReference type="PDBsum" id="8SOS"/>
<dbReference type="SMR" id="P15813"/>
<dbReference type="BioGRID" id="107350">
    <property type="interactions" value="6"/>
</dbReference>
<dbReference type="DIP" id="DIP-60257N"/>
<dbReference type="FunCoup" id="P15813">
    <property type="interactions" value="307"/>
</dbReference>
<dbReference type="IntAct" id="P15813">
    <property type="interactions" value="3"/>
</dbReference>
<dbReference type="STRING" id="9606.ENSP00000501245"/>
<dbReference type="ChEMBL" id="CHEMBL1649053"/>
<dbReference type="DrugBank" id="DB04661">
    <property type="generic name" value="cis-tetracosenoyl sulfatide"/>
</dbReference>
<dbReference type="GlyCosmos" id="P15813">
    <property type="glycosylation" value="4 sites, No reported glycans"/>
</dbReference>
<dbReference type="GlyGen" id="P15813">
    <property type="glycosylation" value="4 sites"/>
</dbReference>
<dbReference type="iPTMnet" id="P15813"/>
<dbReference type="PhosphoSitePlus" id="P15813"/>
<dbReference type="BioMuta" id="CD1D"/>
<dbReference type="DMDM" id="115964"/>
<dbReference type="MassIVE" id="P15813"/>
<dbReference type="PaxDb" id="9606-ENSP00000357153"/>
<dbReference type="PeptideAtlas" id="P15813"/>
<dbReference type="ProteomicsDB" id="53222"/>
<dbReference type="Antibodypedia" id="4236">
    <property type="antibodies" value="544 antibodies from 39 providers"/>
</dbReference>
<dbReference type="DNASU" id="912"/>
<dbReference type="Ensembl" id="ENST00000368171.5">
    <property type="protein sequence ID" value="ENSP00000357153.3"/>
    <property type="gene ID" value="ENSG00000158473.8"/>
</dbReference>
<dbReference type="Ensembl" id="ENST00000673723.4">
    <property type="protein sequence ID" value="ENSP00000501245.3"/>
    <property type="gene ID" value="ENSG00000158473.8"/>
</dbReference>
<dbReference type="Ensembl" id="ENST00000674085.2">
    <property type="protein sequence ID" value="ENSP00000501100.1"/>
    <property type="gene ID" value="ENSG00000158473.8"/>
</dbReference>
<dbReference type="GeneID" id="912"/>
<dbReference type="KEGG" id="hsa:912"/>
<dbReference type="MANE-Select" id="ENST00000674085.2">
    <property type="protein sequence ID" value="ENSP00000501100.1"/>
    <property type="RefSeq nucleotide sequence ID" value="NM_001371762.2"/>
    <property type="RefSeq protein sequence ID" value="NP_001358691.1"/>
</dbReference>
<dbReference type="UCSC" id="uc001frr.4">
    <property type="organism name" value="human"/>
</dbReference>
<dbReference type="AGR" id="HGNC:1637"/>
<dbReference type="CTD" id="912"/>
<dbReference type="DisGeNET" id="912"/>
<dbReference type="GeneCards" id="CD1D"/>
<dbReference type="HGNC" id="HGNC:1637">
    <property type="gene designation" value="CD1D"/>
</dbReference>
<dbReference type="HPA" id="ENSG00000158473">
    <property type="expression patterns" value="Group enriched (intestine, liver, lymphoid tissue)"/>
</dbReference>
<dbReference type="MIM" id="188410">
    <property type="type" value="gene"/>
</dbReference>
<dbReference type="neXtProt" id="NX_P15813"/>
<dbReference type="OpenTargets" id="ENSG00000158473"/>
<dbReference type="PharmGKB" id="PA26196"/>
<dbReference type="VEuPathDB" id="HostDB:ENSG00000158473"/>
<dbReference type="eggNOG" id="ENOG502SJH6">
    <property type="taxonomic scope" value="Eukaryota"/>
</dbReference>
<dbReference type="GeneTree" id="ENSGT01120000271825"/>
<dbReference type="HOGENOM" id="CLU_047501_9_2_1"/>
<dbReference type="InParanoid" id="P15813"/>
<dbReference type="OMA" id="NDICPQF"/>
<dbReference type="OrthoDB" id="8890485at2759"/>
<dbReference type="PAN-GO" id="P15813">
    <property type="GO annotations" value="9 GO annotations based on evolutionary models"/>
</dbReference>
<dbReference type="PhylomeDB" id="P15813"/>
<dbReference type="TreeFam" id="TF336723"/>
<dbReference type="PathwayCommons" id="P15813"/>
<dbReference type="Reactome" id="R-HSA-198933">
    <property type="pathway name" value="Immunoregulatory interactions between a Lymphoid and a non-Lymphoid cell"/>
</dbReference>
<dbReference type="SignaLink" id="P15813"/>
<dbReference type="BioGRID-ORCS" id="912">
    <property type="hits" value="27 hits in 1149 CRISPR screens"/>
</dbReference>
<dbReference type="EvolutionaryTrace" id="P15813"/>
<dbReference type="GeneWiki" id="CD1D"/>
<dbReference type="GenomeRNAi" id="912"/>
<dbReference type="Pharos" id="P15813">
    <property type="development level" value="Tbio"/>
</dbReference>
<dbReference type="PRO" id="PR:P15813"/>
<dbReference type="Proteomes" id="UP000005640">
    <property type="component" value="Chromosome 1"/>
</dbReference>
<dbReference type="RNAct" id="P15813">
    <property type="molecule type" value="protein"/>
</dbReference>
<dbReference type="Bgee" id="ENSG00000158473">
    <property type="expression patterns" value="Expressed in monocyte and 105 other cell types or tissues"/>
</dbReference>
<dbReference type="ExpressionAtlas" id="P15813">
    <property type="expression patterns" value="baseline and differential"/>
</dbReference>
<dbReference type="GO" id="GO:0016323">
    <property type="term" value="C:basolateral plasma membrane"/>
    <property type="evidence" value="ECO:0007669"/>
    <property type="project" value="UniProtKB-SubCell"/>
</dbReference>
<dbReference type="GO" id="GO:0009986">
    <property type="term" value="C:cell surface"/>
    <property type="evidence" value="ECO:0000314"/>
    <property type="project" value="BHF-UCL"/>
</dbReference>
<dbReference type="GO" id="GO:0005737">
    <property type="term" value="C:cytoplasm"/>
    <property type="evidence" value="ECO:0000314"/>
    <property type="project" value="BHF-UCL"/>
</dbReference>
<dbReference type="GO" id="GO:0005783">
    <property type="term" value="C:endoplasmic reticulum"/>
    <property type="evidence" value="ECO:0000314"/>
    <property type="project" value="HPA"/>
</dbReference>
<dbReference type="GO" id="GO:0005789">
    <property type="term" value="C:endoplasmic reticulum membrane"/>
    <property type="evidence" value="ECO:0007669"/>
    <property type="project" value="UniProtKB-SubCell"/>
</dbReference>
<dbReference type="GO" id="GO:0010008">
    <property type="term" value="C:endosome membrane"/>
    <property type="evidence" value="ECO:0007669"/>
    <property type="project" value="UniProtKB-SubCell"/>
</dbReference>
<dbReference type="GO" id="GO:0009897">
    <property type="term" value="C:external side of plasma membrane"/>
    <property type="evidence" value="ECO:0000318"/>
    <property type="project" value="GO_Central"/>
</dbReference>
<dbReference type="GO" id="GO:0005615">
    <property type="term" value="C:extracellular space"/>
    <property type="evidence" value="ECO:0000318"/>
    <property type="project" value="GO_Central"/>
</dbReference>
<dbReference type="GO" id="GO:0005765">
    <property type="term" value="C:lysosomal membrane"/>
    <property type="evidence" value="ECO:0007669"/>
    <property type="project" value="UniProtKB-SubCell"/>
</dbReference>
<dbReference type="GO" id="GO:0005764">
    <property type="term" value="C:lysosome"/>
    <property type="evidence" value="ECO:0000314"/>
    <property type="project" value="UniProtKB"/>
</dbReference>
<dbReference type="GO" id="GO:0005886">
    <property type="term" value="C:plasma membrane"/>
    <property type="evidence" value="ECO:0000304"/>
    <property type="project" value="UniProtKB"/>
</dbReference>
<dbReference type="GO" id="GO:0030881">
    <property type="term" value="F:beta-2-microglobulin binding"/>
    <property type="evidence" value="ECO:0000304"/>
    <property type="project" value="UniProtKB"/>
</dbReference>
<dbReference type="GO" id="GO:0050839">
    <property type="term" value="F:cell adhesion molecule binding"/>
    <property type="evidence" value="ECO:0000353"/>
    <property type="project" value="BHF-UCL"/>
</dbReference>
<dbReference type="GO" id="GO:0030883">
    <property type="term" value="F:endogenous lipid antigen binding"/>
    <property type="evidence" value="ECO:0000318"/>
    <property type="project" value="GO_Central"/>
</dbReference>
<dbReference type="GO" id="GO:0030884">
    <property type="term" value="F:exogenous lipid antigen binding"/>
    <property type="evidence" value="ECO:0000314"/>
    <property type="project" value="UniProtKB"/>
</dbReference>
<dbReference type="GO" id="GO:0030882">
    <property type="term" value="F:lipid antigen binding"/>
    <property type="evidence" value="ECO:0000314"/>
    <property type="project" value="UniProtKB"/>
</dbReference>
<dbReference type="GO" id="GO:0071723">
    <property type="term" value="F:lipopeptide binding"/>
    <property type="evidence" value="ECO:0000318"/>
    <property type="project" value="GO_Central"/>
</dbReference>
<dbReference type="GO" id="GO:0048006">
    <property type="term" value="P:antigen processing and presentation, endogenous lipid antigen via MHC class Ib"/>
    <property type="evidence" value="ECO:0000314"/>
    <property type="project" value="UniProtKB"/>
</dbReference>
<dbReference type="GO" id="GO:0048007">
    <property type="term" value="P:antigen processing and presentation, exogenous lipid antigen via MHC class Ib"/>
    <property type="evidence" value="ECO:0000318"/>
    <property type="project" value="GO_Central"/>
</dbReference>
<dbReference type="GO" id="GO:0016045">
    <property type="term" value="P:detection of bacterium"/>
    <property type="evidence" value="ECO:0000304"/>
    <property type="project" value="UniProtKB"/>
</dbReference>
<dbReference type="GO" id="GO:0034113">
    <property type="term" value="P:heterotypic cell-cell adhesion"/>
    <property type="evidence" value="ECO:0000304"/>
    <property type="project" value="BHF-UCL"/>
</dbReference>
<dbReference type="GO" id="GO:0006955">
    <property type="term" value="P:immune response"/>
    <property type="evidence" value="ECO:0000318"/>
    <property type="project" value="GO_Central"/>
</dbReference>
<dbReference type="GO" id="GO:0045087">
    <property type="term" value="P:innate immune response"/>
    <property type="evidence" value="ECO:0007669"/>
    <property type="project" value="UniProtKB-KW"/>
</dbReference>
<dbReference type="GO" id="GO:0045089">
    <property type="term" value="P:positive regulation of innate immune response"/>
    <property type="evidence" value="ECO:0000304"/>
    <property type="project" value="UniProtKB"/>
</dbReference>
<dbReference type="GO" id="GO:0001916">
    <property type="term" value="P:positive regulation of T cell mediated cytotoxicity"/>
    <property type="evidence" value="ECO:0000318"/>
    <property type="project" value="GO_Central"/>
</dbReference>
<dbReference type="GO" id="GO:0042102">
    <property type="term" value="P:positive regulation of T cell proliferation"/>
    <property type="evidence" value="ECO:0000314"/>
    <property type="project" value="BHF-UCL"/>
</dbReference>
<dbReference type="GO" id="GO:0045058">
    <property type="term" value="P:T cell selection"/>
    <property type="evidence" value="ECO:0000304"/>
    <property type="project" value="UniProtKB"/>
</dbReference>
<dbReference type="CDD" id="cd21029">
    <property type="entry name" value="IgC1_CD1"/>
    <property type="match status" value="1"/>
</dbReference>
<dbReference type="FunFam" id="2.60.40.10:FF:000254">
    <property type="entry name" value="Antigen-presenting glycoprotein CD1d1"/>
    <property type="match status" value="1"/>
</dbReference>
<dbReference type="FunFam" id="3.30.500.10:FF:000002">
    <property type="entry name" value="Antigen-presenting glycoprotein CD1d1"/>
    <property type="match status" value="1"/>
</dbReference>
<dbReference type="Gene3D" id="2.60.40.10">
    <property type="entry name" value="Immunoglobulins"/>
    <property type="match status" value="1"/>
</dbReference>
<dbReference type="Gene3D" id="3.30.500.10">
    <property type="entry name" value="MHC class I-like antigen recognition-like"/>
    <property type="match status" value="1"/>
</dbReference>
<dbReference type="InterPro" id="IPR007110">
    <property type="entry name" value="Ig-like_dom"/>
</dbReference>
<dbReference type="InterPro" id="IPR036179">
    <property type="entry name" value="Ig-like_dom_sf"/>
</dbReference>
<dbReference type="InterPro" id="IPR013783">
    <property type="entry name" value="Ig-like_fold"/>
</dbReference>
<dbReference type="InterPro" id="IPR003597">
    <property type="entry name" value="Ig_C1-set"/>
</dbReference>
<dbReference type="InterPro" id="IPR050208">
    <property type="entry name" value="MHC_class-I_related"/>
</dbReference>
<dbReference type="InterPro" id="IPR011161">
    <property type="entry name" value="MHC_I-like_Ag-recog"/>
</dbReference>
<dbReference type="InterPro" id="IPR037055">
    <property type="entry name" value="MHC_I-like_Ag-recog_sf"/>
</dbReference>
<dbReference type="InterPro" id="IPR011162">
    <property type="entry name" value="MHC_I/II-like_Ag-recog"/>
</dbReference>
<dbReference type="PANTHER" id="PTHR16675:SF175">
    <property type="entry name" value="ANTIGEN-PRESENTING GLYCOPROTEIN CD1D"/>
    <property type="match status" value="1"/>
</dbReference>
<dbReference type="PANTHER" id="PTHR16675">
    <property type="entry name" value="MHC CLASS I-RELATED"/>
    <property type="match status" value="1"/>
</dbReference>
<dbReference type="Pfam" id="PF07654">
    <property type="entry name" value="C1-set"/>
    <property type="match status" value="1"/>
</dbReference>
<dbReference type="Pfam" id="PF16497">
    <property type="entry name" value="MHC_I_3"/>
    <property type="match status" value="1"/>
</dbReference>
<dbReference type="SMART" id="SM00407">
    <property type="entry name" value="IGc1"/>
    <property type="match status" value="1"/>
</dbReference>
<dbReference type="SUPFAM" id="SSF48726">
    <property type="entry name" value="Immunoglobulin"/>
    <property type="match status" value="1"/>
</dbReference>
<dbReference type="SUPFAM" id="SSF54452">
    <property type="entry name" value="MHC antigen-recognition domain"/>
    <property type="match status" value="1"/>
</dbReference>
<dbReference type="PROSITE" id="PS50835">
    <property type="entry name" value="IG_LIKE"/>
    <property type="match status" value="1"/>
</dbReference>
<proteinExistence type="evidence at protein level"/>
<comment type="function">
    <text evidence="6">Antigen-presenting protein that binds self and non-self glycolipids and presents them to T-cell receptors on natural killer T-cells.</text>
</comment>
<comment type="subunit">
    <text evidence="4 5 7">Heterodimer with B2M (beta-2-microglobulin). Interacts with MHC II.</text>
</comment>
<comment type="interaction">
    <interactant intactId="EBI-15643544">
        <id>P15813</id>
    </interactant>
    <interactant intactId="EBI-357481">
        <id>Q12959</id>
        <label>DLG1</label>
    </interactant>
    <organismsDiffer>false</organismsDiffer>
    <experiments>2</experiments>
</comment>
<comment type="subcellular location">
    <subcellularLocation>
        <location evidence="4 6 9">Cell membrane</location>
        <topology evidence="10">Single-pass type I membrane protein</topology>
    </subcellularLocation>
    <subcellularLocation>
        <location evidence="9">Basolateral cell membrane</location>
        <topology evidence="10">Single-pass type I membrane protein</topology>
    </subcellularLocation>
    <subcellularLocation>
        <location evidence="4 9">Endosome membrane</location>
        <topology evidence="10">Single-pass type I membrane protein</topology>
    </subcellularLocation>
    <subcellularLocation>
        <location evidence="6 9">Lysosome membrane</location>
        <topology evidence="9">Single-pass type I membrane protein</topology>
    </subcellularLocation>
    <subcellularLocation>
        <location evidence="4">Endoplasmic reticulum membrane</location>
        <topology evidence="4">Single-pass type I membrane protein</topology>
    </subcellularLocation>
    <text evidence="9">Subject to intracellular trafficking between the cell membrane, endosomes and lysosomes.</text>
</comment>
<comment type="tissue specificity">
    <text>Expressed on cortical thymocytes, on certain T-cell leukemias, and in various other tissues.</text>
</comment>
<comment type="miscellaneous">
    <text evidence="1">During protein synthesis and maturation, CD1 family members bind endogenous lipids that are replaced by lipid or glycolipid antigens when the proteins are internalized and pass through endosomes, before trafficking back to the cell surface.</text>
</comment>
<keyword id="KW-0002">3D-structure</keyword>
<keyword id="KW-1003">Cell membrane</keyword>
<keyword id="KW-1015">Disulfide bond</keyword>
<keyword id="KW-0256">Endoplasmic reticulum</keyword>
<keyword id="KW-0967">Endosome</keyword>
<keyword id="KW-0325">Glycoprotein</keyword>
<keyword id="KW-0391">Immunity</keyword>
<keyword id="KW-0393">Immunoglobulin domain</keyword>
<keyword id="KW-0399">Innate immunity</keyword>
<keyword id="KW-0458">Lysosome</keyword>
<keyword id="KW-0472">Membrane</keyword>
<keyword id="KW-1267">Proteomics identification</keyword>
<keyword id="KW-1185">Reference proteome</keyword>
<keyword id="KW-0732">Signal</keyword>
<keyword id="KW-0812">Transmembrane</keyword>
<keyword id="KW-1133">Transmembrane helix</keyword>
<sequence>MGCLLFLLLWALLQAWGSAEVPQRLFPLRCLQISSFANSSWTRTDGLAWLGELQTHSWSNDSDTVRSLKPWSQGTFSDQQWETLQHIFRVYRSSFTRDVKEFAKMLRLSYPLELQVSAGCEVHPGNASNNFFHVAFQGKDILSFQGTSWEPTQEAPLWVNLAIQVLNQDKWTRETVQWLLNGTCPQFVSGLLESGKSELKKQVKPKAWLSRGPSPGPGRLLLVCHVSGFYPKPVWVKWMRGEQEQQGTQPGDILPNADETWYLRATLDVVAGEAAGLSCRVKHSSLEGQDIVLYWGGSYTSMGLIALAVLACLLFLLIVGFTSRFKRQTSYQGVL</sequence>
<name>CD1D_HUMAN</name>